<dbReference type="EMBL" id="CP000633">
    <property type="protein sequence ID" value="ACM36317.1"/>
    <property type="molecule type" value="Genomic_DNA"/>
</dbReference>
<dbReference type="RefSeq" id="WP_015915738.1">
    <property type="nucleotide sequence ID" value="NC_011989.1"/>
</dbReference>
<dbReference type="SMR" id="B9JVN7"/>
<dbReference type="STRING" id="311402.Avi_1840"/>
<dbReference type="KEGG" id="avi:Avi_1840"/>
<dbReference type="eggNOG" id="COG0087">
    <property type="taxonomic scope" value="Bacteria"/>
</dbReference>
<dbReference type="HOGENOM" id="CLU_044142_2_0_5"/>
<dbReference type="Proteomes" id="UP000001596">
    <property type="component" value="Chromosome 1"/>
</dbReference>
<dbReference type="GO" id="GO:0022625">
    <property type="term" value="C:cytosolic large ribosomal subunit"/>
    <property type="evidence" value="ECO:0007669"/>
    <property type="project" value="TreeGrafter"/>
</dbReference>
<dbReference type="GO" id="GO:0019843">
    <property type="term" value="F:rRNA binding"/>
    <property type="evidence" value="ECO:0007669"/>
    <property type="project" value="UniProtKB-UniRule"/>
</dbReference>
<dbReference type="GO" id="GO:0003735">
    <property type="term" value="F:structural constituent of ribosome"/>
    <property type="evidence" value="ECO:0007669"/>
    <property type="project" value="InterPro"/>
</dbReference>
<dbReference type="GO" id="GO:0006412">
    <property type="term" value="P:translation"/>
    <property type="evidence" value="ECO:0007669"/>
    <property type="project" value="UniProtKB-UniRule"/>
</dbReference>
<dbReference type="FunFam" id="2.40.30.10:FF:000004">
    <property type="entry name" value="50S ribosomal protein L3"/>
    <property type="match status" value="1"/>
</dbReference>
<dbReference type="FunFam" id="3.30.160.810:FF:000001">
    <property type="entry name" value="50S ribosomal protein L3"/>
    <property type="match status" value="1"/>
</dbReference>
<dbReference type="Gene3D" id="3.30.160.810">
    <property type="match status" value="1"/>
</dbReference>
<dbReference type="Gene3D" id="2.40.30.10">
    <property type="entry name" value="Translation factors"/>
    <property type="match status" value="1"/>
</dbReference>
<dbReference type="HAMAP" id="MF_01325_B">
    <property type="entry name" value="Ribosomal_uL3_B"/>
    <property type="match status" value="1"/>
</dbReference>
<dbReference type="InterPro" id="IPR000597">
    <property type="entry name" value="Ribosomal_uL3"/>
</dbReference>
<dbReference type="InterPro" id="IPR019927">
    <property type="entry name" value="Ribosomal_uL3_bac/org-type"/>
</dbReference>
<dbReference type="InterPro" id="IPR019926">
    <property type="entry name" value="Ribosomal_uL3_CS"/>
</dbReference>
<dbReference type="InterPro" id="IPR009000">
    <property type="entry name" value="Transl_B-barrel_sf"/>
</dbReference>
<dbReference type="NCBIfam" id="TIGR03625">
    <property type="entry name" value="L3_bact"/>
    <property type="match status" value="1"/>
</dbReference>
<dbReference type="PANTHER" id="PTHR11229">
    <property type="entry name" value="50S RIBOSOMAL PROTEIN L3"/>
    <property type="match status" value="1"/>
</dbReference>
<dbReference type="PANTHER" id="PTHR11229:SF16">
    <property type="entry name" value="LARGE RIBOSOMAL SUBUNIT PROTEIN UL3C"/>
    <property type="match status" value="1"/>
</dbReference>
<dbReference type="Pfam" id="PF00297">
    <property type="entry name" value="Ribosomal_L3"/>
    <property type="match status" value="1"/>
</dbReference>
<dbReference type="SUPFAM" id="SSF50447">
    <property type="entry name" value="Translation proteins"/>
    <property type="match status" value="1"/>
</dbReference>
<dbReference type="PROSITE" id="PS00474">
    <property type="entry name" value="RIBOSOMAL_L3"/>
    <property type="match status" value="1"/>
</dbReference>
<feature type="chain" id="PRO_1000165860" description="Large ribosomal subunit protein uL3">
    <location>
        <begin position="1"/>
        <end position="213"/>
    </location>
</feature>
<feature type="modified residue" description="N5-methylglutamine" evidence="1">
    <location>
        <position position="151"/>
    </location>
</feature>
<name>RL3_ALLAM</name>
<gene>
    <name evidence="1" type="primary">rplC</name>
    <name type="ordered locus">Avi_1840</name>
</gene>
<accession>B9JVN7</accession>
<comment type="function">
    <text evidence="1">One of the primary rRNA binding proteins, it binds directly near the 3'-end of the 23S rRNA, where it nucleates assembly of the 50S subunit.</text>
</comment>
<comment type="subunit">
    <text evidence="1">Part of the 50S ribosomal subunit. Forms a cluster with proteins L14 and L19.</text>
</comment>
<comment type="PTM">
    <text evidence="1">Methylated by PrmB.</text>
</comment>
<comment type="similarity">
    <text evidence="1">Belongs to the universal ribosomal protein uL3 family.</text>
</comment>
<protein>
    <recommendedName>
        <fullName evidence="1">Large ribosomal subunit protein uL3</fullName>
    </recommendedName>
    <alternativeName>
        <fullName evidence="2">50S ribosomal protein L3</fullName>
    </alternativeName>
</protein>
<reference key="1">
    <citation type="journal article" date="2009" name="J. Bacteriol.">
        <title>Genome sequences of three Agrobacterium biovars help elucidate the evolution of multichromosome genomes in bacteria.</title>
        <authorList>
            <person name="Slater S.C."/>
            <person name="Goldman B.S."/>
            <person name="Goodner B."/>
            <person name="Setubal J.C."/>
            <person name="Farrand S.K."/>
            <person name="Nester E.W."/>
            <person name="Burr T.J."/>
            <person name="Banta L."/>
            <person name="Dickerman A.W."/>
            <person name="Paulsen I."/>
            <person name="Otten L."/>
            <person name="Suen G."/>
            <person name="Welch R."/>
            <person name="Almeida N.F."/>
            <person name="Arnold F."/>
            <person name="Burton O.T."/>
            <person name="Du Z."/>
            <person name="Ewing A."/>
            <person name="Godsy E."/>
            <person name="Heisel S."/>
            <person name="Houmiel K.L."/>
            <person name="Jhaveri J."/>
            <person name="Lu J."/>
            <person name="Miller N.M."/>
            <person name="Norton S."/>
            <person name="Chen Q."/>
            <person name="Phoolcharoen W."/>
            <person name="Ohlin V."/>
            <person name="Ondrusek D."/>
            <person name="Pride N."/>
            <person name="Stricklin S.L."/>
            <person name="Sun J."/>
            <person name="Wheeler C."/>
            <person name="Wilson L."/>
            <person name="Zhu H."/>
            <person name="Wood D.W."/>
        </authorList>
    </citation>
    <scope>NUCLEOTIDE SEQUENCE [LARGE SCALE GENOMIC DNA]</scope>
    <source>
        <strain>ATCC BAA-846 / DSM 112012 / S4</strain>
    </source>
</reference>
<organism>
    <name type="scientific">Allorhizobium ampelinum (strain ATCC BAA-846 / DSM 112012 / S4)</name>
    <name type="common">Agrobacterium vitis (strain S4)</name>
    <dbReference type="NCBI Taxonomy" id="311402"/>
    <lineage>
        <taxon>Bacteria</taxon>
        <taxon>Pseudomonadati</taxon>
        <taxon>Pseudomonadota</taxon>
        <taxon>Alphaproteobacteria</taxon>
        <taxon>Hyphomicrobiales</taxon>
        <taxon>Rhizobiaceae</taxon>
        <taxon>Rhizobium/Agrobacterium group</taxon>
        <taxon>Allorhizobium</taxon>
        <taxon>Allorhizobium ampelinum</taxon>
    </lineage>
</organism>
<sequence length="213" mass="22615">MRSGVIAQKVGMTRVYNDAGEHVPVTVLRLDNCQVLAQRTVDKHGYTAVQLGAGQAKVKNTSKAMRGNFAAANVEPKAKLVEFRVSEDNLMDVGSELKAGHFEAGQLVDVTGTTIGKGFAGAMKRHNFGGLRATHGVSVSHRSHGSTGSNQDPGKVWKGKRMAGHMGQTRVTTQNLEVVSTDEDRGLILVKGAVPGSKGSWIIVRDAVKSAAK</sequence>
<evidence type="ECO:0000255" key="1">
    <source>
        <dbReference type="HAMAP-Rule" id="MF_01325"/>
    </source>
</evidence>
<evidence type="ECO:0000305" key="2"/>
<proteinExistence type="inferred from homology"/>
<keyword id="KW-0488">Methylation</keyword>
<keyword id="KW-1185">Reference proteome</keyword>
<keyword id="KW-0687">Ribonucleoprotein</keyword>
<keyword id="KW-0689">Ribosomal protein</keyword>
<keyword id="KW-0694">RNA-binding</keyword>
<keyword id="KW-0699">rRNA-binding</keyword>